<sequence>MKFPGKRKSKHYFPVNARDPLLQQFQPENETSAAWVVGIDQTLVDIEAKVDDEFIERYGLSAGHSLVIEDDVAEALYQELKQKNLITHQFAGGTIGNTMHNYSVLADDRSVLLGVMCSNIEIGSYAYRYLCNTSSRTDLNYLQGVDGPIGRCFTLIGESGERTFAISPGHMNQLRAESIPEDVIAGASALVLTSYLVRCKPGEPMPEATMKAIEYAKKYNVPVVLTLGTKFVIAENPQWWQQFLKDHVSILAMNEDEAEALTGESDPLLASDKALDWVDLVLCTAGPIGLYMAGFTEDEAKRKTQHPLLPGAIAEFNQYEFSRAMRHKDCQNPLRVYSHIAPYMGGPEKIMNTNGAGDGALAALLHDITANSYHRSNVPNSSKHKFTWLTYSSLAQVCKYANRVSYQVLNQHSPRLTRGLPEREDSLEESYWDR</sequence>
<organism>
    <name type="scientific">Escherichia coli O6:H1 (strain CFT073 / ATCC 700928 / UPEC)</name>
    <dbReference type="NCBI Taxonomy" id="199310"/>
    <lineage>
        <taxon>Bacteria</taxon>
        <taxon>Pseudomonadati</taxon>
        <taxon>Pseudomonadota</taxon>
        <taxon>Gammaproteobacteria</taxon>
        <taxon>Enterobacterales</taxon>
        <taxon>Enterobacteriaceae</taxon>
        <taxon>Escherichia</taxon>
    </lineage>
</organism>
<gene>
    <name evidence="1" type="primary">gsk</name>
    <name type="ordered locus">c0597</name>
</gene>
<protein>
    <recommendedName>
        <fullName evidence="1">Guanosine-inosine kinase</fullName>
        <ecNumber evidence="1">2.7.1.73</ecNumber>
    </recommendedName>
</protein>
<proteinExistence type="inferred from homology"/>
<accession>P0AEW7</accession>
<accession>P22937</accession>
<name>INGK_ECOL6</name>
<dbReference type="EC" id="2.7.1.73" evidence="1"/>
<dbReference type="EMBL" id="AE014075">
    <property type="protein sequence ID" value="AAN79075.1"/>
    <property type="molecule type" value="Genomic_DNA"/>
</dbReference>
<dbReference type="RefSeq" id="WP_000671574.1">
    <property type="nucleotide sequence ID" value="NZ_CP051263.1"/>
</dbReference>
<dbReference type="SMR" id="P0AEW7"/>
<dbReference type="STRING" id="199310.c0597"/>
<dbReference type="DNASU" id="1036004"/>
<dbReference type="GeneID" id="93776973"/>
<dbReference type="KEGG" id="ecc:c0597"/>
<dbReference type="eggNOG" id="COG0524">
    <property type="taxonomic scope" value="Bacteria"/>
</dbReference>
<dbReference type="HOGENOM" id="CLU_060237_0_0_6"/>
<dbReference type="BioCyc" id="ECOL199310:C0597-MONOMER"/>
<dbReference type="UniPathway" id="UPA00591">
    <property type="reaction ID" value="UER00647"/>
</dbReference>
<dbReference type="UniPathway" id="UPA00909"/>
<dbReference type="Proteomes" id="UP000001410">
    <property type="component" value="Chromosome"/>
</dbReference>
<dbReference type="GO" id="GO:0005524">
    <property type="term" value="F:ATP binding"/>
    <property type="evidence" value="ECO:0007669"/>
    <property type="project" value="UniProtKB-UniRule"/>
</dbReference>
<dbReference type="GO" id="GO:0106366">
    <property type="term" value="F:guanosine kinase activity"/>
    <property type="evidence" value="ECO:0007669"/>
    <property type="project" value="InterPro"/>
</dbReference>
<dbReference type="GO" id="GO:0008906">
    <property type="term" value="F:inosine kinase activity"/>
    <property type="evidence" value="ECO:0007669"/>
    <property type="project" value="UniProtKB-UniRule"/>
</dbReference>
<dbReference type="GO" id="GO:0032263">
    <property type="term" value="P:GMP salvage"/>
    <property type="evidence" value="ECO:0007669"/>
    <property type="project" value="UniProtKB-UniRule"/>
</dbReference>
<dbReference type="GO" id="GO:0032264">
    <property type="term" value="P:IMP salvage"/>
    <property type="evidence" value="ECO:0007669"/>
    <property type="project" value="UniProtKB-UniRule"/>
</dbReference>
<dbReference type="GO" id="GO:0006166">
    <property type="term" value="P:purine ribonucleoside salvage"/>
    <property type="evidence" value="ECO:0007669"/>
    <property type="project" value="UniProtKB-KW"/>
</dbReference>
<dbReference type="Gene3D" id="3.40.1190.20">
    <property type="match status" value="1"/>
</dbReference>
<dbReference type="HAMAP" id="MF_02246">
    <property type="entry name" value="Gua_Ino_kinase"/>
    <property type="match status" value="1"/>
</dbReference>
<dbReference type="InterPro" id="IPR052700">
    <property type="entry name" value="Carb_kinase_PfkB-like"/>
</dbReference>
<dbReference type="InterPro" id="IPR002173">
    <property type="entry name" value="Carboh/pur_kinase_PfkB_CS"/>
</dbReference>
<dbReference type="InterPro" id="IPR046405">
    <property type="entry name" value="IngK"/>
</dbReference>
<dbReference type="InterPro" id="IPR011611">
    <property type="entry name" value="PfkB_dom"/>
</dbReference>
<dbReference type="InterPro" id="IPR029056">
    <property type="entry name" value="Ribokinase-like"/>
</dbReference>
<dbReference type="NCBIfam" id="NF011655">
    <property type="entry name" value="PRK15074.1"/>
    <property type="match status" value="1"/>
</dbReference>
<dbReference type="PANTHER" id="PTHR43320:SF3">
    <property type="entry name" value="CARBOHYDRATE KINASE PFKB DOMAIN-CONTAINING PROTEIN"/>
    <property type="match status" value="1"/>
</dbReference>
<dbReference type="PANTHER" id="PTHR43320">
    <property type="entry name" value="SUGAR KINASE"/>
    <property type="match status" value="1"/>
</dbReference>
<dbReference type="Pfam" id="PF00294">
    <property type="entry name" value="PfkB"/>
    <property type="match status" value="1"/>
</dbReference>
<dbReference type="SUPFAM" id="SSF53613">
    <property type="entry name" value="Ribokinase-like"/>
    <property type="match status" value="1"/>
</dbReference>
<dbReference type="PROSITE" id="PS00584">
    <property type="entry name" value="PFKB_KINASES_2"/>
    <property type="match status" value="1"/>
</dbReference>
<feature type="chain" id="PRO_0000080072" description="Guanosine-inosine kinase">
    <location>
        <begin position="1"/>
        <end position="434"/>
    </location>
</feature>
<feature type="binding site" evidence="1">
    <location>
        <begin position="40"/>
        <end position="45"/>
    </location>
    <ligand>
        <name>GMP</name>
        <dbReference type="ChEBI" id="CHEBI:58115"/>
    </ligand>
</feature>
<feature type="binding site" evidence="1">
    <location>
        <begin position="93"/>
        <end position="97"/>
    </location>
    <ligand>
        <name>GMP</name>
        <dbReference type="ChEBI" id="CHEBI:58115"/>
    </ligand>
</feature>
<feature type="binding site" evidence="1">
    <location>
        <position position="198"/>
    </location>
    <ligand>
        <name>GMP</name>
        <dbReference type="ChEBI" id="CHEBI:58115"/>
    </ligand>
</feature>
<feature type="binding site" evidence="1">
    <location>
        <begin position="284"/>
        <end position="289"/>
    </location>
    <ligand>
        <name>ATP</name>
        <dbReference type="ChEBI" id="CHEBI:30616"/>
    </ligand>
</feature>
<feature type="binding site" evidence="1">
    <location>
        <position position="357"/>
    </location>
    <ligand>
        <name>ATP</name>
        <dbReference type="ChEBI" id="CHEBI:30616"/>
    </ligand>
</feature>
<feature type="binding site" evidence="1">
    <location>
        <position position="402"/>
    </location>
    <ligand>
        <name>ATP</name>
        <dbReference type="ChEBI" id="CHEBI:30616"/>
    </ligand>
</feature>
<evidence type="ECO:0000255" key="1">
    <source>
        <dbReference type="HAMAP-Rule" id="MF_02246"/>
    </source>
</evidence>
<evidence type="ECO:0000305" key="2"/>
<reference key="1">
    <citation type="journal article" date="2002" name="Proc. Natl. Acad. Sci. U.S.A.">
        <title>Extensive mosaic structure revealed by the complete genome sequence of uropathogenic Escherichia coli.</title>
        <authorList>
            <person name="Welch R.A."/>
            <person name="Burland V."/>
            <person name="Plunkett G. III"/>
            <person name="Redford P."/>
            <person name="Roesch P."/>
            <person name="Rasko D."/>
            <person name="Buckles E.L."/>
            <person name="Liou S.-R."/>
            <person name="Boutin A."/>
            <person name="Hackett J."/>
            <person name="Stroud D."/>
            <person name="Mayhew G.F."/>
            <person name="Rose D.J."/>
            <person name="Zhou S."/>
            <person name="Schwartz D.C."/>
            <person name="Perna N.T."/>
            <person name="Mobley H.L.T."/>
            <person name="Donnenberg M.S."/>
            <person name="Blattner F.R."/>
        </authorList>
    </citation>
    <scope>NUCLEOTIDE SEQUENCE [LARGE SCALE GENOMIC DNA]</scope>
    <source>
        <strain>CFT073 / ATCC 700928 / UPEC</strain>
    </source>
</reference>
<keyword id="KW-0067">ATP-binding</keyword>
<keyword id="KW-0418">Kinase</keyword>
<keyword id="KW-0460">Magnesium</keyword>
<keyword id="KW-0547">Nucleotide-binding</keyword>
<keyword id="KW-0660">Purine salvage</keyword>
<keyword id="KW-1185">Reference proteome</keyword>
<keyword id="KW-0808">Transferase</keyword>
<comment type="function">
    <text evidence="1">Catalyzes the phosphorylation of guanosine and inosine to GMP and IMP, respectively.</text>
</comment>
<comment type="catalytic activity">
    <reaction evidence="1">
        <text>guanosine + ATP = GMP + ADP + H(+)</text>
        <dbReference type="Rhea" id="RHEA:27710"/>
        <dbReference type="ChEBI" id="CHEBI:15378"/>
        <dbReference type="ChEBI" id="CHEBI:16750"/>
        <dbReference type="ChEBI" id="CHEBI:30616"/>
        <dbReference type="ChEBI" id="CHEBI:58115"/>
        <dbReference type="ChEBI" id="CHEBI:456216"/>
        <dbReference type="EC" id="2.7.1.73"/>
    </reaction>
</comment>
<comment type="catalytic activity">
    <reaction evidence="1">
        <text>inosine + ATP = IMP + ADP + H(+)</text>
        <dbReference type="Rhea" id="RHEA:21140"/>
        <dbReference type="ChEBI" id="CHEBI:15378"/>
        <dbReference type="ChEBI" id="CHEBI:17596"/>
        <dbReference type="ChEBI" id="CHEBI:30616"/>
        <dbReference type="ChEBI" id="CHEBI:58053"/>
        <dbReference type="ChEBI" id="CHEBI:456216"/>
        <dbReference type="EC" id="2.7.1.73"/>
    </reaction>
</comment>
<comment type="cofactor">
    <cofactor evidence="1">
        <name>Mg(2+)</name>
        <dbReference type="ChEBI" id="CHEBI:18420"/>
    </cofactor>
</comment>
<comment type="pathway">
    <text evidence="1">Purine metabolism; IMP biosynthesis via salvage pathway; IMP from inosine: step 1/1.</text>
</comment>
<comment type="pathway">
    <text evidence="1">Purine metabolism; GMP biosynthesis via salvage pathway.</text>
</comment>
<comment type="similarity">
    <text evidence="1 2">Belongs to the carbohydrate kinase PfkB family.</text>
</comment>